<feature type="chain" id="PRO_0000242846" description="ATP phosphoribosyltransferase regulatory subunit">
    <location>
        <begin position="1"/>
        <end position="391"/>
    </location>
</feature>
<proteinExistence type="inferred from homology"/>
<name>HISZ_PROMT</name>
<dbReference type="EMBL" id="CP000095">
    <property type="protein sequence ID" value="AAZ57799.1"/>
    <property type="molecule type" value="Genomic_DNA"/>
</dbReference>
<dbReference type="RefSeq" id="WP_011293841.1">
    <property type="nucleotide sequence ID" value="NC_007335.2"/>
</dbReference>
<dbReference type="SMR" id="Q46L29"/>
<dbReference type="STRING" id="59920.PMN2A_0307"/>
<dbReference type="KEGG" id="pmn:PMN2A_0307"/>
<dbReference type="HOGENOM" id="CLU_025113_0_2_3"/>
<dbReference type="OrthoDB" id="9800814at2"/>
<dbReference type="PhylomeDB" id="Q46L29"/>
<dbReference type="UniPathway" id="UPA00031">
    <property type="reaction ID" value="UER00006"/>
</dbReference>
<dbReference type="Proteomes" id="UP000002535">
    <property type="component" value="Chromosome"/>
</dbReference>
<dbReference type="GO" id="GO:0005737">
    <property type="term" value="C:cytoplasm"/>
    <property type="evidence" value="ECO:0007669"/>
    <property type="project" value="UniProtKB-SubCell"/>
</dbReference>
<dbReference type="GO" id="GO:0004821">
    <property type="term" value="F:histidine-tRNA ligase activity"/>
    <property type="evidence" value="ECO:0007669"/>
    <property type="project" value="TreeGrafter"/>
</dbReference>
<dbReference type="GO" id="GO:0006427">
    <property type="term" value="P:histidyl-tRNA aminoacylation"/>
    <property type="evidence" value="ECO:0007669"/>
    <property type="project" value="TreeGrafter"/>
</dbReference>
<dbReference type="GO" id="GO:0000105">
    <property type="term" value="P:L-histidine biosynthetic process"/>
    <property type="evidence" value="ECO:0007669"/>
    <property type="project" value="UniProtKB-UniRule"/>
</dbReference>
<dbReference type="Gene3D" id="3.30.930.10">
    <property type="entry name" value="Bira Bifunctional Protein, Domain 2"/>
    <property type="match status" value="1"/>
</dbReference>
<dbReference type="HAMAP" id="MF_00125">
    <property type="entry name" value="HisZ"/>
    <property type="match status" value="1"/>
</dbReference>
<dbReference type="InterPro" id="IPR045864">
    <property type="entry name" value="aa-tRNA-synth_II/BPL/LPL"/>
</dbReference>
<dbReference type="InterPro" id="IPR041715">
    <property type="entry name" value="HisRS-like_core"/>
</dbReference>
<dbReference type="InterPro" id="IPR004516">
    <property type="entry name" value="HisRS/HisZ"/>
</dbReference>
<dbReference type="InterPro" id="IPR004517">
    <property type="entry name" value="HisZ"/>
</dbReference>
<dbReference type="NCBIfam" id="TIGR00443">
    <property type="entry name" value="hisZ_biosyn_reg"/>
    <property type="match status" value="1"/>
</dbReference>
<dbReference type="NCBIfam" id="NF008939">
    <property type="entry name" value="PRK12292.2-1"/>
    <property type="match status" value="1"/>
</dbReference>
<dbReference type="PANTHER" id="PTHR43707:SF1">
    <property type="entry name" value="HISTIDINE--TRNA LIGASE, MITOCHONDRIAL-RELATED"/>
    <property type="match status" value="1"/>
</dbReference>
<dbReference type="PANTHER" id="PTHR43707">
    <property type="entry name" value="HISTIDYL-TRNA SYNTHETASE"/>
    <property type="match status" value="1"/>
</dbReference>
<dbReference type="Pfam" id="PF13393">
    <property type="entry name" value="tRNA-synt_His"/>
    <property type="match status" value="1"/>
</dbReference>
<dbReference type="PIRSF" id="PIRSF001549">
    <property type="entry name" value="His-tRNA_synth"/>
    <property type="match status" value="1"/>
</dbReference>
<dbReference type="SUPFAM" id="SSF55681">
    <property type="entry name" value="Class II aaRS and biotin synthetases"/>
    <property type="match status" value="1"/>
</dbReference>
<organism>
    <name type="scientific">Prochlorococcus marinus (strain NATL2A)</name>
    <dbReference type="NCBI Taxonomy" id="59920"/>
    <lineage>
        <taxon>Bacteria</taxon>
        <taxon>Bacillati</taxon>
        <taxon>Cyanobacteriota</taxon>
        <taxon>Cyanophyceae</taxon>
        <taxon>Synechococcales</taxon>
        <taxon>Prochlorococcaceae</taxon>
        <taxon>Prochlorococcus</taxon>
    </lineage>
</organism>
<reference key="1">
    <citation type="journal article" date="2007" name="PLoS Genet.">
        <title>Patterns and implications of gene gain and loss in the evolution of Prochlorococcus.</title>
        <authorList>
            <person name="Kettler G.C."/>
            <person name="Martiny A.C."/>
            <person name="Huang K."/>
            <person name="Zucker J."/>
            <person name="Coleman M.L."/>
            <person name="Rodrigue S."/>
            <person name="Chen F."/>
            <person name="Lapidus A."/>
            <person name="Ferriera S."/>
            <person name="Johnson J."/>
            <person name="Steglich C."/>
            <person name="Church G.M."/>
            <person name="Richardson P."/>
            <person name="Chisholm S.W."/>
        </authorList>
    </citation>
    <scope>NUCLEOTIDE SEQUENCE [LARGE SCALE GENOMIC DNA]</scope>
    <source>
        <strain>NATL2A</strain>
    </source>
</reference>
<evidence type="ECO:0000255" key="1">
    <source>
        <dbReference type="HAMAP-Rule" id="MF_00125"/>
    </source>
</evidence>
<gene>
    <name evidence="1" type="primary">hisZ</name>
    <name type="ordered locus">PMN2A_0307</name>
</gene>
<sequence>MTLQPASGARDLNPQQVRKNHLIASKLSSLYQLWGYERISPPHIERLDTLTAAGGISNNEILKIVSDEPLGLRPEITASIVRAASTRFNEYERPLRFWSAGTSFKCNQSIDGGIDIEESFQSGVELIGTKAINAEIELLSLLIESLEVIEIDQKYKMTLLIGNTYLLELILSSFDSTKIDQIKKILSDLDYIALTTLDVKEEQRMFIKTIMNMRGKPEKVLTNLQNIYGSNSYIDKLEELFTIIEPLAKEKGIEVQLDPTLGTKYKLYSGLTFSLVSSSTSAPVTIAKGGRYDDLVKKFSSSAQNCYGIGFSISVDKVRELVSTSKEKLVNNVKVLIAYKQSANLYKALKQQKELHRKGIISVISHEPLKTIDETNQLLKTNRCNKIEWID</sequence>
<protein>
    <recommendedName>
        <fullName evidence="1">ATP phosphoribosyltransferase regulatory subunit</fullName>
    </recommendedName>
</protein>
<accession>Q46L29</accession>
<comment type="function">
    <text evidence="1">Required for the first step of histidine biosynthesis. May allow the feedback regulation of ATP phosphoribosyltransferase activity by histidine.</text>
</comment>
<comment type="pathway">
    <text evidence="1">Amino-acid biosynthesis; L-histidine biosynthesis; L-histidine from 5-phospho-alpha-D-ribose 1-diphosphate: step 1/9.</text>
</comment>
<comment type="subunit">
    <text evidence="1">Heteromultimer composed of HisG and HisZ subunits.</text>
</comment>
<comment type="subcellular location">
    <subcellularLocation>
        <location evidence="1">Cytoplasm</location>
    </subcellularLocation>
</comment>
<comment type="miscellaneous">
    <text>This function is generally fulfilled by the C-terminal part of HisG, which is missing in some bacteria such as this one.</text>
</comment>
<comment type="similarity">
    <text evidence="1">Belongs to the class-II aminoacyl-tRNA synthetase family. HisZ subfamily.</text>
</comment>
<keyword id="KW-0028">Amino-acid biosynthesis</keyword>
<keyword id="KW-0963">Cytoplasm</keyword>
<keyword id="KW-0368">Histidine biosynthesis</keyword>
<keyword id="KW-1185">Reference proteome</keyword>